<reference key="1">
    <citation type="submission" date="2007-10" db="EMBL/GenBank/DDBJ databases">
        <title>Brucella canis ATCC 23365 whole genome shotgun sequencing project.</title>
        <authorList>
            <person name="Setubal J.C."/>
            <person name="Bowns C."/>
            <person name="Boyle S."/>
            <person name="Crasta O.R."/>
            <person name="Czar M.J."/>
            <person name="Dharmanolla C."/>
            <person name="Gillespie J.J."/>
            <person name="Kenyon R.W."/>
            <person name="Lu J."/>
            <person name="Mane S."/>
            <person name="Mohapatra S."/>
            <person name="Nagrani S."/>
            <person name="Purkayastha A."/>
            <person name="Rajasimha H.K."/>
            <person name="Shallom J.M."/>
            <person name="Shallom S."/>
            <person name="Shukla M."/>
            <person name="Snyder E.E."/>
            <person name="Sobral B.W."/>
            <person name="Wattam A.R."/>
            <person name="Will R."/>
            <person name="Williams K."/>
            <person name="Yoo H."/>
            <person name="Bruce D."/>
            <person name="Detter C."/>
            <person name="Munk C."/>
            <person name="Brettin T.S."/>
        </authorList>
    </citation>
    <scope>NUCLEOTIDE SEQUENCE [LARGE SCALE GENOMIC DNA]</scope>
    <source>
        <strain>ATCC 23365 / NCTC 10854 / RM-666</strain>
    </source>
</reference>
<feature type="chain" id="PRO_1000083706" description="Betaine aldehyde dehydrogenase">
    <location>
        <begin position="1"/>
        <end position="487"/>
    </location>
</feature>
<feature type="active site" description="Charge relay system" evidence="1">
    <location>
        <position position="161"/>
    </location>
</feature>
<feature type="active site" description="Proton acceptor" evidence="1">
    <location>
        <position position="249"/>
    </location>
</feature>
<feature type="active site" description="Nucleophile" evidence="1">
    <location>
        <position position="283"/>
    </location>
</feature>
<feature type="active site" description="Charge relay system" evidence="1">
    <location>
        <position position="461"/>
    </location>
</feature>
<feature type="binding site" evidence="1">
    <location>
        <position position="27"/>
    </location>
    <ligand>
        <name>K(+)</name>
        <dbReference type="ChEBI" id="CHEBI:29103"/>
        <label>1</label>
    </ligand>
</feature>
<feature type="binding site" evidence="1">
    <location>
        <position position="93"/>
    </location>
    <ligand>
        <name>K(+)</name>
        <dbReference type="ChEBI" id="CHEBI:29103"/>
        <label>1</label>
    </ligand>
</feature>
<feature type="binding site" evidence="1">
    <location>
        <begin position="149"/>
        <end position="151"/>
    </location>
    <ligand>
        <name>NAD(+)</name>
        <dbReference type="ChEBI" id="CHEBI:57540"/>
    </ligand>
</feature>
<feature type="binding site" evidence="1">
    <location>
        <begin position="175"/>
        <end position="178"/>
    </location>
    <ligand>
        <name>NAD(+)</name>
        <dbReference type="ChEBI" id="CHEBI:57540"/>
    </ligand>
</feature>
<feature type="binding site" evidence="1">
    <location>
        <begin position="228"/>
        <end position="231"/>
    </location>
    <ligand>
        <name>NAD(+)</name>
        <dbReference type="ChEBI" id="CHEBI:57540"/>
    </ligand>
</feature>
<feature type="binding site" evidence="1">
    <location>
        <position position="243"/>
    </location>
    <ligand>
        <name>K(+)</name>
        <dbReference type="ChEBI" id="CHEBI:29103"/>
        <label>2</label>
    </ligand>
</feature>
<feature type="binding site" evidence="1">
    <location>
        <position position="251"/>
    </location>
    <ligand>
        <name>NAD(+)</name>
        <dbReference type="ChEBI" id="CHEBI:57540"/>
    </ligand>
</feature>
<feature type="binding site" description="covalent" evidence="1">
    <location>
        <position position="283"/>
    </location>
    <ligand>
        <name>NAD(+)</name>
        <dbReference type="ChEBI" id="CHEBI:57540"/>
    </ligand>
</feature>
<feature type="binding site" evidence="1">
    <location>
        <position position="384"/>
    </location>
    <ligand>
        <name>NAD(+)</name>
        <dbReference type="ChEBI" id="CHEBI:57540"/>
    </ligand>
</feature>
<feature type="binding site" evidence="1">
    <location>
        <position position="454"/>
    </location>
    <ligand>
        <name>K(+)</name>
        <dbReference type="ChEBI" id="CHEBI:29103"/>
        <label>2</label>
    </ligand>
</feature>
<feature type="binding site" evidence="1">
    <location>
        <position position="457"/>
    </location>
    <ligand>
        <name>K(+)</name>
        <dbReference type="ChEBI" id="CHEBI:29103"/>
        <label>2</label>
    </ligand>
</feature>
<feature type="modified residue" description="Cysteine sulfenic acid (-SOH)" evidence="1">
    <location>
        <position position="283"/>
    </location>
</feature>
<sequence length="487" mass="52094">MKAQPKASHFIGGAFVEDKAGKPLPVIYPATDEEIASLYSATPGIIEAAYAAALKAQGEWAALKPVERGRILRRTAEILREKNRKLSKLETLDTGKALQETLVADAASAADALEFFGGIISGFNGEFVELGGSFAYTRREALGICVGIGAWNYPIQIAAWKSAPALAMGNAFIFKPSENTPLSALALAEAYKEAGLPDGLFNVVQGYGDVGAALVNHRLTAKVSLTGSVPTGRRIMAQAGEQLKHVTMELGGKSPLIVFDDADLESAIGGAMLGNFYSTGQVCSNGTRVFVHKNIRERFIERLVERTRKIRIGDPFDEATQMGPLISAAQRDKVLSYIKKGKAEGATLACGGGVPKLQGFDKGFFIEPTVFADVTDTMTIAREEIFGPVMSVLEFSDEDEVIARANDSEFGLAAGVFTADLSRGHHVIGQIKAGTCWINAYNLTPVEVPFGGYKQSGIGRENGIAALAHYSQIKTVYVEMGKVDSPY</sequence>
<keyword id="KW-0479">Metal-binding</keyword>
<keyword id="KW-0520">NAD</keyword>
<keyword id="KW-0521">NADP</keyword>
<keyword id="KW-0558">Oxidation</keyword>
<keyword id="KW-0560">Oxidoreductase</keyword>
<keyword id="KW-0630">Potassium</keyword>
<keyword id="KW-1185">Reference proteome</keyword>
<comment type="function">
    <text evidence="1">Involved in the biosynthesis of the osmoprotectant glycine betaine. Catalyzes the irreversible oxidation of betaine aldehyde to the corresponding acid.</text>
</comment>
<comment type="catalytic activity">
    <reaction evidence="1">
        <text>betaine aldehyde + NAD(+) + H2O = glycine betaine + NADH + 2 H(+)</text>
        <dbReference type="Rhea" id="RHEA:15305"/>
        <dbReference type="ChEBI" id="CHEBI:15377"/>
        <dbReference type="ChEBI" id="CHEBI:15378"/>
        <dbReference type="ChEBI" id="CHEBI:15710"/>
        <dbReference type="ChEBI" id="CHEBI:17750"/>
        <dbReference type="ChEBI" id="CHEBI:57540"/>
        <dbReference type="ChEBI" id="CHEBI:57945"/>
        <dbReference type="EC" id="1.2.1.8"/>
    </reaction>
    <physiologicalReaction direction="left-to-right" evidence="1">
        <dbReference type="Rhea" id="RHEA:15306"/>
    </physiologicalReaction>
</comment>
<comment type="cofactor">
    <cofactor evidence="1">
        <name>K(+)</name>
        <dbReference type="ChEBI" id="CHEBI:29103"/>
    </cofactor>
    <text evidence="1">Binds 2 potassium ions per subunit.</text>
</comment>
<comment type="pathway">
    <text evidence="1">Amine and polyamine biosynthesis; betaine biosynthesis via choline pathway; betaine from betaine aldehyde: step 1/1.</text>
</comment>
<comment type="subunit">
    <text evidence="1">Dimer of dimers.</text>
</comment>
<comment type="similarity">
    <text evidence="1">Belongs to the aldehyde dehydrogenase family.</text>
</comment>
<proteinExistence type="inferred from homology"/>
<evidence type="ECO:0000255" key="1">
    <source>
        <dbReference type="HAMAP-Rule" id="MF_00804"/>
    </source>
</evidence>
<name>BETB_BRUC2</name>
<accession>A9M9H7</accession>
<dbReference type="EC" id="1.2.1.8" evidence="1"/>
<dbReference type="EMBL" id="CP000872">
    <property type="protein sequence ID" value="ABX61641.1"/>
    <property type="molecule type" value="Genomic_DNA"/>
</dbReference>
<dbReference type="RefSeq" id="WP_004690653.1">
    <property type="nucleotide sequence ID" value="NC_010103.1"/>
</dbReference>
<dbReference type="SMR" id="A9M9H7"/>
<dbReference type="GeneID" id="55590288"/>
<dbReference type="KEGG" id="bcs:BCAN_A0564"/>
<dbReference type="HOGENOM" id="CLU_005391_0_1_5"/>
<dbReference type="PhylomeDB" id="A9M9H7"/>
<dbReference type="UniPathway" id="UPA00529">
    <property type="reaction ID" value="UER00386"/>
</dbReference>
<dbReference type="Proteomes" id="UP000001385">
    <property type="component" value="Chromosome I"/>
</dbReference>
<dbReference type="GO" id="GO:0008802">
    <property type="term" value="F:betaine-aldehyde dehydrogenase (NAD+) activity"/>
    <property type="evidence" value="ECO:0007669"/>
    <property type="project" value="UniProtKB-UniRule"/>
</dbReference>
<dbReference type="GO" id="GO:0046872">
    <property type="term" value="F:metal ion binding"/>
    <property type="evidence" value="ECO:0007669"/>
    <property type="project" value="UniProtKB-KW"/>
</dbReference>
<dbReference type="GO" id="GO:0019285">
    <property type="term" value="P:glycine betaine biosynthetic process from choline"/>
    <property type="evidence" value="ECO:0007669"/>
    <property type="project" value="UniProtKB-UniRule"/>
</dbReference>
<dbReference type="CDD" id="cd07090">
    <property type="entry name" value="ALDH_F9_TMBADH"/>
    <property type="match status" value="1"/>
</dbReference>
<dbReference type="FunFam" id="3.40.605.10:FF:000026">
    <property type="entry name" value="Aldehyde dehydrogenase, putative"/>
    <property type="match status" value="1"/>
</dbReference>
<dbReference type="FunFam" id="3.40.309.10:FF:000014">
    <property type="entry name" value="NAD/NADP-dependent betaine aldehyde dehydrogenase"/>
    <property type="match status" value="1"/>
</dbReference>
<dbReference type="FunFam" id="3.40.605.10:FF:000007">
    <property type="entry name" value="NAD/NADP-dependent betaine aldehyde dehydrogenase"/>
    <property type="match status" value="1"/>
</dbReference>
<dbReference type="Gene3D" id="3.40.605.10">
    <property type="entry name" value="Aldehyde Dehydrogenase, Chain A, domain 1"/>
    <property type="match status" value="1"/>
</dbReference>
<dbReference type="Gene3D" id="3.40.309.10">
    <property type="entry name" value="Aldehyde Dehydrogenase, Chain A, domain 2"/>
    <property type="match status" value="1"/>
</dbReference>
<dbReference type="HAMAP" id="MF_00804">
    <property type="entry name" value="BADH"/>
    <property type="match status" value="1"/>
</dbReference>
<dbReference type="InterPro" id="IPR016161">
    <property type="entry name" value="Ald_DH/histidinol_DH"/>
</dbReference>
<dbReference type="InterPro" id="IPR016163">
    <property type="entry name" value="Ald_DH_C"/>
</dbReference>
<dbReference type="InterPro" id="IPR016160">
    <property type="entry name" value="Ald_DH_CS_CYS"/>
</dbReference>
<dbReference type="InterPro" id="IPR029510">
    <property type="entry name" value="Ald_DH_CS_GLU"/>
</dbReference>
<dbReference type="InterPro" id="IPR016162">
    <property type="entry name" value="Ald_DH_N"/>
</dbReference>
<dbReference type="InterPro" id="IPR015590">
    <property type="entry name" value="Aldehyde_DH_dom"/>
</dbReference>
<dbReference type="InterPro" id="IPR011264">
    <property type="entry name" value="BADH"/>
</dbReference>
<dbReference type="NCBIfam" id="TIGR01804">
    <property type="entry name" value="BADH"/>
    <property type="match status" value="1"/>
</dbReference>
<dbReference type="NCBIfam" id="NF009725">
    <property type="entry name" value="PRK13252.1"/>
    <property type="match status" value="1"/>
</dbReference>
<dbReference type="PANTHER" id="PTHR11699">
    <property type="entry name" value="ALDEHYDE DEHYDROGENASE-RELATED"/>
    <property type="match status" value="1"/>
</dbReference>
<dbReference type="Pfam" id="PF00171">
    <property type="entry name" value="Aldedh"/>
    <property type="match status" value="1"/>
</dbReference>
<dbReference type="SUPFAM" id="SSF53720">
    <property type="entry name" value="ALDH-like"/>
    <property type="match status" value="1"/>
</dbReference>
<dbReference type="PROSITE" id="PS00070">
    <property type="entry name" value="ALDEHYDE_DEHYDR_CYS"/>
    <property type="match status" value="1"/>
</dbReference>
<dbReference type="PROSITE" id="PS00687">
    <property type="entry name" value="ALDEHYDE_DEHYDR_GLU"/>
    <property type="match status" value="1"/>
</dbReference>
<gene>
    <name evidence="1" type="primary">betB</name>
    <name type="ordered locus">BCAN_A0564</name>
</gene>
<protein>
    <recommendedName>
        <fullName evidence="1">Betaine aldehyde dehydrogenase</fullName>
        <shortName evidence="1">BADH</shortName>
        <ecNumber evidence="1">1.2.1.8</ecNumber>
    </recommendedName>
</protein>
<organism>
    <name type="scientific">Brucella canis (strain ATCC 23365 / NCTC 10854 / RM-666)</name>
    <dbReference type="NCBI Taxonomy" id="483179"/>
    <lineage>
        <taxon>Bacteria</taxon>
        <taxon>Pseudomonadati</taxon>
        <taxon>Pseudomonadota</taxon>
        <taxon>Alphaproteobacteria</taxon>
        <taxon>Hyphomicrobiales</taxon>
        <taxon>Brucellaceae</taxon>
        <taxon>Brucella/Ochrobactrum group</taxon>
        <taxon>Brucella</taxon>
    </lineage>
</organism>